<keyword id="KW-0256">Endoplasmic reticulum</keyword>
<keyword id="KW-0325">Glycoprotein</keyword>
<keyword id="KW-0328">Glycosyltransferase</keyword>
<keyword id="KW-0460">Magnesium</keyword>
<keyword id="KW-0472">Membrane</keyword>
<keyword id="KW-0479">Metal-binding</keyword>
<keyword id="KW-0808">Transferase</keyword>
<keyword id="KW-0812">Transmembrane</keyword>
<keyword id="KW-1133">Transmembrane helix</keyword>
<evidence type="ECO:0000250" key="1">
    <source>
        <dbReference type="UniProtKB" id="P07286"/>
    </source>
</evidence>
<evidence type="ECO:0000250" key="2">
    <source>
        <dbReference type="UniProtKB" id="P23338"/>
    </source>
</evidence>
<evidence type="ECO:0000250" key="3">
    <source>
        <dbReference type="UniProtKB" id="Q9H3H5"/>
    </source>
</evidence>
<evidence type="ECO:0000255" key="4"/>
<evidence type="ECO:0000305" key="5"/>
<sequence>MTLGLVESSRNAAFAVAAHAPVLGLILLGSIVAYVGTLRYIPNVARTLLDRNIFGIDINKSTEEQRQKFAAKRRAGQTEEKEFQKQAIPESLGILVGAMYLSVVVVLTVCLRFLGAAGEGLDNPYASLPGPLMTITVMLLLGFVDDVLDVKWRHKIILTALGSLPLIMTYDGSLSVLMPCAFGRFGLSTMNVMKEWRLGLAAPQGEPTTTFRATAPSTWFSFTVNHRSYVKVTESGAALIYLGPVYLVYLSMLCIFCTNSINILAGVNGVEVGQSIVIAVASVVYNLFQMRLDRQLTPDFSSLDAAAADARDMTSDHQLRALLLLGPFIGVSLALWRYNRYPARVFVGDSYTYFAGTVLAVSSITGVYSKTLLLFFAPQVFNFLISLPQLFSIVPCPRHRVPTWNPRTNLLSNSHNYTILNVILYLFGDMHEAKLTWAILKCQVIACVLGFVVRYVLSAFLYDEVR</sequence>
<accession>P42864</accession>
<protein>
    <recommendedName>
        <fullName>UDP-N-acetylglucosamine--dolichyl-phosphate N-acetylglucosaminephosphotransferase</fullName>
        <ecNumber evidence="3">2.7.8.15</ecNumber>
    </recommendedName>
    <alternativeName>
        <fullName>GlcNAc-1-P transferase</fullName>
        <shortName>G1PT</shortName>
        <shortName>GPT</shortName>
    </alternativeName>
    <alternativeName>
        <fullName>N-acetylglucosamine-1-phosphate transferase</fullName>
    </alternativeName>
</protein>
<feature type="chain" id="PRO_0000108763" description="UDP-N-acetylglucosamine--dolichyl-phosphate N-acetylglucosaminephosphotransferase">
    <location>
        <begin position="1"/>
        <end position="466"/>
    </location>
</feature>
<feature type="transmembrane region" description="Helical" evidence="4">
    <location>
        <begin position="12"/>
        <end position="32"/>
    </location>
</feature>
<feature type="transmembrane region" description="Helical" evidence="4">
    <location>
        <begin position="91"/>
        <end position="111"/>
    </location>
</feature>
<feature type="transmembrane region" description="Helical" evidence="4">
    <location>
        <begin position="124"/>
        <end position="144"/>
    </location>
</feature>
<feature type="transmembrane region" description="Helical" evidence="4">
    <location>
        <begin position="156"/>
        <end position="176"/>
    </location>
</feature>
<feature type="transmembrane region" description="Helical" evidence="4">
    <location>
        <begin position="236"/>
        <end position="256"/>
    </location>
</feature>
<feature type="transmembrane region" description="Helical" evidence="4">
    <location>
        <begin position="263"/>
        <end position="283"/>
    </location>
</feature>
<feature type="transmembrane region" description="Helical" evidence="4">
    <location>
        <begin position="316"/>
        <end position="336"/>
    </location>
</feature>
<feature type="transmembrane region" description="Helical" evidence="4">
    <location>
        <begin position="345"/>
        <end position="365"/>
    </location>
</feature>
<feature type="transmembrane region" description="Helical" evidence="4">
    <location>
        <begin position="374"/>
        <end position="394"/>
    </location>
</feature>
<feature type="transmembrane region" description="Helical" evidence="4">
    <location>
        <begin position="442"/>
        <end position="462"/>
    </location>
</feature>
<feature type="binding site" evidence="3">
    <location>
        <position position="57"/>
    </location>
    <ligand>
        <name>UDP-N-acetyl-alpha-D-glucosamine</name>
        <dbReference type="ChEBI" id="CHEBI:57705"/>
    </ligand>
</feature>
<feature type="binding site" evidence="3">
    <location>
        <position position="90"/>
    </location>
    <ligand>
        <name>UDP-N-acetyl-alpha-D-glucosamine</name>
        <dbReference type="ChEBI" id="CHEBI:57705"/>
    </ligand>
</feature>
<feature type="binding site" evidence="3">
    <location>
        <position position="155"/>
    </location>
    <ligand>
        <name>dolichyl phosphate</name>
        <dbReference type="ChEBI" id="CHEBI:57683"/>
    </ligand>
</feature>
<feature type="binding site" evidence="3">
    <location>
        <begin position="255"/>
        <end position="263"/>
    </location>
    <ligand>
        <name>dolichyl phosphate</name>
        <dbReference type="ChEBI" id="CHEBI:57683"/>
    </ligand>
</feature>
<feature type="binding site" evidence="3">
    <location>
        <position position="262"/>
    </location>
    <ligand>
        <name>Mg(2+)</name>
        <dbReference type="ChEBI" id="CHEBI:18420"/>
    </ligand>
</feature>
<feature type="binding site" evidence="3">
    <location>
        <position position="268"/>
    </location>
    <ligand>
        <name>UDP-N-acetyl-alpha-D-glucosamine</name>
        <dbReference type="ChEBI" id="CHEBI:57705"/>
    </ligand>
</feature>
<feature type="binding site" evidence="3">
    <location>
        <position position="349"/>
    </location>
    <ligand>
        <name>Mg(2+)</name>
        <dbReference type="ChEBI" id="CHEBI:18420"/>
    </ligand>
</feature>
<feature type="binding site" evidence="3">
    <location>
        <begin position="398"/>
        <end position="400"/>
    </location>
    <ligand>
        <name>UDP-N-acetyl-alpha-D-glucosamine</name>
        <dbReference type="ChEBI" id="CHEBI:57705"/>
    </ligand>
</feature>
<feature type="glycosylation site" description="N-linked (GlcNAc...) asparagine" evidence="4">
    <location>
        <position position="59"/>
    </location>
</feature>
<feature type="glycosylation site" description="N-linked (GlcNAc...) asparagine" evidence="4">
    <location>
        <position position="416"/>
    </location>
</feature>
<gene>
    <name type="primary">NAGT</name>
</gene>
<proteinExistence type="inferred from homology"/>
<name>GPT_LEIAM</name>
<reference key="1">
    <citation type="journal article" date="1992" name="Mol. Cell. Biol.">
        <title>The 63-kilobase circular amplicon of tunicamycin-resistant Leishmania amazonensis contains a functional N-acetylglucosamine-1-phosphate transferase gene that can be used as a dominant selectable marker in transfection.</title>
        <authorList>
            <person name="Liu X."/>
            <person name="Chang K.-P."/>
        </authorList>
    </citation>
    <scope>NUCLEOTIDE SEQUENCE [GENOMIC DNA]</scope>
    <source>
        <strain>MHOM/BR/73/LV78</strain>
    </source>
</reference>
<organism>
    <name type="scientific">Leishmania amazonensis</name>
    <dbReference type="NCBI Taxonomy" id="5659"/>
    <lineage>
        <taxon>Eukaryota</taxon>
        <taxon>Discoba</taxon>
        <taxon>Euglenozoa</taxon>
        <taxon>Kinetoplastea</taxon>
        <taxon>Metakinetoplastina</taxon>
        <taxon>Trypanosomatida</taxon>
        <taxon>Trypanosomatidae</taxon>
        <taxon>Leishmaniinae</taxon>
        <taxon>Leishmania</taxon>
    </lineage>
</organism>
<dbReference type="EC" id="2.7.8.15" evidence="3"/>
<dbReference type="EMBL" id="M96635">
    <property type="protein sequence ID" value="AAA29258.1"/>
    <property type="molecule type" value="Genomic_DNA"/>
</dbReference>
<dbReference type="PIR" id="A44495">
    <property type="entry name" value="A44495"/>
</dbReference>
<dbReference type="PIR" id="S27823">
    <property type="entry name" value="S27823"/>
</dbReference>
<dbReference type="SMR" id="P42864"/>
<dbReference type="GlyCosmos" id="P42864">
    <property type="glycosylation" value="2 sites, No reported glycans"/>
</dbReference>
<dbReference type="VEuPathDB" id="TriTrypDB:LAMA_000349000"/>
<dbReference type="VEuPathDB" id="TriTrypDB:LAMAPH8_000359000"/>
<dbReference type="UniPathway" id="UPA00378"/>
<dbReference type="GO" id="GO:0005789">
    <property type="term" value="C:endoplasmic reticulum membrane"/>
    <property type="evidence" value="ECO:0007669"/>
    <property type="project" value="UniProtKB-SubCell"/>
</dbReference>
<dbReference type="GO" id="GO:0016757">
    <property type="term" value="F:glycosyltransferase activity"/>
    <property type="evidence" value="ECO:0007669"/>
    <property type="project" value="UniProtKB-KW"/>
</dbReference>
<dbReference type="GO" id="GO:0046872">
    <property type="term" value="F:metal ion binding"/>
    <property type="evidence" value="ECO:0007669"/>
    <property type="project" value="UniProtKB-KW"/>
</dbReference>
<dbReference type="GO" id="GO:0003975">
    <property type="term" value="F:UDP-N-acetylglucosamine-dolichyl-phosphate N-acetylglucosaminephosphotransferase activity"/>
    <property type="evidence" value="ECO:0007669"/>
    <property type="project" value="UniProtKB-EC"/>
</dbReference>
<dbReference type="GO" id="GO:0006488">
    <property type="term" value="P:dolichol-linked oligosaccharide biosynthetic process"/>
    <property type="evidence" value="ECO:0007669"/>
    <property type="project" value="InterPro"/>
</dbReference>
<dbReference type="CDD" id="cd06855">
    <property type="entry name" value="GT_GPT_euk"/>
    <property type="match status" value="1"/>
</dbReference>
<dbReference type="InterPro" id="IPR000715">
    <property type="entry name" value="Glycosyl_transferase_4"/>
</dbReference>
<dbReference type="InterPro" id="IPR033895">
    <property type="entry name" value="GPT"/>
</dbReference>
<dbReference type="PANTHER" id="PTHR10571">
    <property type="entry name" value="UDP-N-ACETYLGLUCOSAMINE--DOLICHYL-PHOSPHATE N-ACETYLGLUCOSAMINEPHOSPHOTRANSFERASE"/>
    <property type="match status" value="1"/>
</dbReference>
<dbReference type="PANTHER" id="PTHR10571:SF0">
    <property type="entry name" value="UDP-N-ACETYLGLUCOSAMINE--DOLICHYL-PHOSPHATE N-ACETYLGLUCOSAMINEPHOSPHOTRANSFERASE"/>
    <property type="match status" value="1"/>
</dbReference>
<dbReference type="Pfam" id="PF00953">
    <property type="entry name" value="Glycos_transf_4"/>
    <property type="match status" value="1"/>
</dbReference>
<comment type="function">
    <text evidence="1">UDP-N-acetylglucosamine--dolichyl-phosphate N-acetylglucosaminephosphotransferase that operates in the biosynthetic pathway of dolichol-linked oligosaccharides, the glycan precursors employed in protein asparagine (N)-glycosylation. The assembly of dolichol-linked oligosaccharides begins on the cytosolic side of the endoplasmic reticulum membrane and finishes in its lumen. The sequential addition of sugars to dolichol pyrophosphate produces dolichol-linked oligosaccharides containing fourteen sugars, including two GlcNAcs, nine mannoses and three glucoses. Once assembled, the oligosaccharide is transferred from the lipid to nascent proteins by oligosaccharyltransferases. Catalyzes the initial step of dolichol-linked oligosaccharide biosynthesis, transfering GlcNAc-1-P from cytosolic UDP-GlcNAc onto the carrier lipid dolichyl phosphate (P-dolichol), yielding GlcNAc-P-P-dolichol embedded in the cytoplasmic leaflet of the endoplasmic reticulum membrane.</text>
</comment>
<comment type="catalytic activity">
    <reaction evidence="1">
        <text>a di-trans,poly-cis-dolichyl phosphate + UDP-N-acetyl-alpha-D-glucosamine = an N-acetyl-alpha-D-glucosaminyl-diphospho-di-trans,poly-cis-dolichol + UMP</text>
        <dbReference type="Rhea" id="RHEA:13289"/>
        <dbReference type="Rhea" id="RHEA-COMP:19498"/>
        <dbReference type="Rhea" id="RHEA-COMP:19507"/>
        <dbReference type="ChEBI" id="CHEBI:57683"/>
        <dbReference type="ChEBI" id="CHEBI:57705"/>
        <dbReference type="ChEBI" id="CHEBI:57865"/>
        <dbReference type="ChEBI" id="CHEBI:58427"/>
        <dbReference type="EC" id="2.7.8.15"/>
    </reaction>
    <physiologicalReaction direction="left-to-right" evidence="1">
        <dbReference type="Rhea" id="RHEA:13290"/>
    </physiologicalReaction>
</comment>
<comment type="cofactor">
    <cofactor evidence="3">
        <name>Mg(2+)</name>
        <dbReference type="ChEBI" id="CHEBI:18420"/>
    </cofactor>
</comment>
<comment type="activity regulation">
    <text evidence="2">Inhibited by natural nucleoside antibiotic tunicamycin, which acts as a structural analog and competitor of UDP-GlcNAc.</text>
</comment>
<comment type="pathway">
    <text evidence="1">Protein modification; protein glycosylation.</text>
</comment>
<comment type="subcellular location">
    <subcellularLocation>
        <location evidence="2">Endoplasmic reticulum membrane</location>
        <topology evidence="3">Multi-pass membrane protein</topology>
    </subcellularLocation>
</comment>
<comment type="miscellaneous">
    <text>In Leishmania sp., tunicamycin-resistant variants are associated with increased levels of NAGT gene transcription due to gene amplification.</text>
</comment>
<comment type="similarity">
    <text evidence="5">Belongs to the glycosyltransferase 4 family.</text>
</comment>